<gene>
    <name evidence="1" type="primary">minE</name>
    <name type="ordered locus">E2348C_1293</name>
</gene>
<evidence type="ECO:0000255" key="1">
    <source>
        <dbReference type="HAMAP-Rule" id="MF_00262"/>
    </source>
</evidence>
<comment type="function">
    <text evidence="1">Prevents the cell division inhibition by proteins MinC and MinD at internal division sites while permitting inhibition at polar sites. This ensures cell division at the proper site by restricting the formation of a division septum at the midpoint of the long axis of the cell.</text>
</comment>
<comment type="similarity">
    <text evidence="1">Belongs to the MinE family.</text>
</comment>
<name>MINE_ECO27</name>
<protein>
    <recommendedName>
        <fullName evidence="1">Cell division topological specificity factor</fullName>
    </recommendedName>
</protein>
<organism>
    <name type="scientific">Escherichia coli O127:H6 (strain E2348/69 / EPEC)</name>
    <dbReference type="NCBI Taxonomy" id="574521"/>
    <lineage>
        <taxon>Bacteria</taxon>
        <taxon>Pseudomonadati</taxon>
        <taxon>Pseudomonadota</taxon>
        <taxon>Gammaproteobacteria</taxon>
        <taxon>Enterobacterales</taxon>
        <taxon>Enterobacteriaceae</taxon>
        <taxon>Escherichia</taxon>
    </lineage>
</organism>
<accession>B7UQ59</accession>
<sequence length="88" mass="10235">MALLDFFLSRKKNTANIAKERLQIIVAERRRSDAEPHYLPQLRKDILEVICKYVQIDPEMVTVQLEQKDGDISILELNVTLPEAEELK</sequence>
<reference key="1">
    <citation type="journal article" date="2009" name="J. Bacteriol.">
        <title>Complete genome sequence and comparative genome analysis of enteropathogenic Escherichia coli O127:H6 strain E2348/69.</title>
        <authorList>
            <person name="Iguchi A."/>
            <person name="Thomson N.R."/>
            <person name="Ogura Y."/>
            <person name="Saunders D."/>
            <person name="Ooka T."/>
            <person name="Henderson I.R."/>
            <person name="Harris D."/>
            <person name="Asadulghani M."/>
            <person name="Kurokawa K."/>
            <person name="Dean P."/>
            <person name="Kenny B."/>
            <person name="Quail M.A."/>
            <person name="Thurston S."/>
            <person name="Dougan G."/>
            <person name="Hayashi T."/>
            <person name="Parkhill J."/>
            <person name="Frankel G."/>
        </authorList>
    </citation>
    <scope>NUCLEOTIDE SEQUENCE [LARGE SCALE GENOMIC DNA]</scope>
    <source>
        <strain>E2348/69 / EPEC</strain>
    </source>
</reference>
<feature type="chain" id="PRO_1000191279" description="Cell division topological specificity factor">
    <location>
        <begin position="1"/>
        <end position="88"/>
    </location>
</feature>
<dbReference type="EMBL" id="FM180568">
    <property type="protein sequence ID" value="CAS08841.1"/>
    <property type="molecule type" value="Genomic_DNA"/>
</dbReference>
<dbReference type="RefSeq" id="WP_001185665.1">
    <property type="nucleotide sequence ID" value="NC_011601.1"/>
</dbReference>
<dbReference type="SMR" id="B7UQ59"/>
<dbReference type="GeneID" id="93776260"/>
<dbReference type="KEGG" id="ecg:E2348C_1293"/>
<dbReference type="HOGENOM" id="CLU_137929_2_2_6"/>
<dbReference type="Proteomes" id="UP000008205">
    <property type="component" value="Chromosome"/>
</dbReference>
<dbReference type="GO" id="GO:0051301">
    <property type="term" value="P:cell division"/>
    <property type="evidence" value="ECO:0007669"/>
    <property type="project" value="UniProtKB-KW"/>
</dbReference>
<dbReference type="GO" id="GO:0032955">
    <property type="term" value="P:regulation of division septum assembly"/>
    <property type="evidence" value="ECO:0007669"/>
    <property type="project" value="InterPro"/>
</dbReference>
<dbReference type="FunFam" id="3.30.1070.10:FF:000001">
    <property type="entry name" value="Cell division topological specificity factor"/>
    <property type="match status" value="1"/>
</dbReference>
<dbReference type="Gene3D" id="3.30.1070.10">
    <property type="entry name" value="Cell division topological specificity factor MinE"/>
    <property type="match status" value="1"/>
</dbReference>
<dbReference type="HAMAP" id="MF_00262">
    <property type="entry name" value="MinE"/>
    <property type="match status" value="1"/>
</dbReference>
<dbReference type="InterPro" id="IPR005527">
    <property type="entry name" value="MinE"/>
</dbReference>
<dbReference type="InterPro" id="IPR036707">
    <property type="entry name" value="MinE_sf"/>
</dbReference>
<dbReference type="NCBIfam" id="TIGR01215">
    <property type="entry name" value="minE"/>
    <property type="match status" value="1"/>
</dbReference>
<dbReference type="NCBIfam" id="NF001422">
    <property type="entry name" value="PRK00296.1"/>
    <property type="match status" value="1"/>
</dbReference>
<dbReference type="Pfam" id="PF03776">
    <property type="entry name" value="MinE"/>
    <property type="match status" value="1"/>
</dbReference>
<dbReference type="SUPFAM" id="SSF55229">
    <property type="entry name" value="Cell division protein MinE topological specificity domain"/>
    <property type="match status" value="1"/>
</dbReference>
<proteinExistence type="inferred from homology"/>
<keyword id="KW-0131">Cell cycle</keyword>
<keyword id="KW-0132">Cell division</keyword>
<keyword id="KW-1185">Reference proteome</keyword>